<organism>
    <name type="scientific">Geobacter metallireducens (strain ATCC 53774 / DSM 7210 / GS-15)</name>
    <dbReference type="NCBI Taxonomy" id="269799"/>
    <lineage>
        <taxon>Bacteria</taxon>
        <taxon>Pseudomonadati</taxon>
        <taxon>Thermodesulfobacteriota</taxon>
        <taxon>Desulfuromonadia</taxon>
        <taxon>Geobacterales</taxon>
        <taxon>Geobacteraceae</taxon>
        <taxon>Geobacter</taxon>
    </lineage>
</organism>
<keyword id="KW-0030">Aminoacyl-tRNA synthetase</keyword>
<keyword id="KW-0067">ATP-binding</keyword>
<keyword id="KW-0963">Cytoplasm</keyword>
<keyword id="KW-0436">Ligase</keyword>
<keyword id="KW-0547">Nucleotide-binding</keyword>
<keyword id="KW-0648">Protein biosynthesis</keyword>
<keyword id="KW-1185">Reference proteome</keyword>
<evidence type="ECO:0000255" key="1">
    <source>
        <dbReference type="HAMAP-Rule" id="MF_00123"/>
    </source>
</evidence>
<evidence type="ECO:0000305" key="2"/>
<name>SYR_GEOMG</name>
<comment type="catalytic activity">
    <reaction evidence="1">
        <text>tRNA(Arg) + L-arginine + ATP = L-arginyl-tRNA(Arg) + AMP + diphosphate</text>
        <dbReference type="Rhea" id="RHEA:20301"/>
        <dbReference type="Rhea" id="RHEA-COMP:9658"/>
        <dbReference type="Rhea" id="RHEA-COMP:9673"/>
        <dbReference type="ChEBI" id="CHEBI:30616"/>
        <dbReference type="ChEBI" id="CHEBI:32682"/>
        <dbReference type="ChEBI" id="CHEBI:33019"/>
        <dbReference type="ChEBI" id="CHEBI:78442"/>
        <dbReference type="ChEBI" id="CHEBI:78513"/>
        <dbReference type="ChEBI" id="CHEBI:456215"/>
        <dbReference type="EC" id="6.1.1.19"/>
    </reaction>
</comment>
<comment type="subunit">
    <text evidence="1">Monomer.</text>
</comment>
<comment type="subcellular location">
    <subcellularLocation>
        <location evidence="1">Cytoplasm</location>
    </subcellularLocation>
</comment>
<comment type="similarity">
    <text evidence="1">Belongs to the class-I aminoacyl-tRNA synthetase family.</text>
</comment>
<comment type="sequence caution" evidence="2">
    <conflict type="erroneous initiation">
        <sequence resource="EMBL-CDS" id="ABB31668"/>
    </conflict>
</comment>
<reference key="1">
    <citation type="journal article" date="2009" name="BMC Microbiol.">
        <title>The genome sequence of Geobacter metallireducens: features of metabolism, physiology and regulation common and dissimilar to Geobacter sulfurreducens.</title>
        <authorList>
            <person name="Aklujkar M."/>
            <person name="Krushkal J."/>
            <person name="DiBartolo G."/>
            <person name="Lapidus A."/>
            <person name="Land M.L."/>
            <person name="Lovley D.R."/>
        </authorList>
    </citation>
    <scope>NUCLEOTIDE SEQUENCE [LARGE SCALE GENOMIC DNA]</scope>
    <source>
        <strain>ATCC 53774 / DSM 7210 / GS-15</strain>
    </source>
</reference>
<gene>
    <name evidence="1" type="primary">argS</name>
    <name type="ordered locus">Gmet_1434</name>
</gene>
<protein>
    <recommendedName>
        <fullName evidence="1">Arginine--tRNA ligase</fullName>
        <ecNumber evidence="1">6.1.1.19</ecNumber>
    </recommendedName>
    <alternativeName>
        <fullName evidence="1">Arginyl-tRNA synthetase</fullName>
        <shortName evidence="1">ArgRS</shortName>
    </alternativeName>
</protein>
<proteinExistence type="inferred from homology"/>
<accession>Q39VQ6</accession>
<sequence>MKDRVRSLVAEGIERCFADGSLASNQMPAIVIEKPAHAEHGDFACTVAMSMAKAERKAPRVIAETIVKHIENGESGIIGGIDIAGPGFINFRIKNEAWSRTLAVVEAAGASFGRSCAGEERKVQVEFVSANPTGPLHIGHGRGAAIGDTICRLLSASGFDVTREFYYNDAGAQIANLALSVQSRCLGIEPGDPRWPADGYQGDYIKDVARSYLNRETVDAGDQHVTAAGDPNDLDAIRRFAVAYLRREQDQDLLAFDVHFDVYSLESSLYTEGRVEEVVRRLIENGHTFEQDGALWLRTTDFGDDKDRVMRKSDGSYTYFVPDVAYHLAKWERGFTRVINEQGADHHSTITRVRAGLQALNAGIPQEWPEYVLHQMVTVMRGGEEVKISKRAGSYVTLRDLIDEVGRDATRFFFLMRKPDSQLVFDIDLAKQQSLENPVYYVQYAHARISSIFEAACDRGISVPSFPDAHVDLLETPEEIELIKLIGSFPEVIEGSALSFEPHRITYYLQELAGAFHSFYNKNRVIGEGKELSSARLFLLKGVAQVLKNGLALLGVSAPEKM</sequence>
<feature type="chain" id="PRO_0000242026" description="Arginine--tRNA ligase">
    <location>
        <begin position="1"/>
        <end position="562"/>
    </location>
</feature>
<feature type="short sequence motif" description="'HIGH' region">
    <location>
        <begin position="130"/>
        <end position="140"/>
    </location>
</feature>
<dbReference type="EC" id="6.1.1.19" evidence="1"/>
<dbReference type="EMBL" id="CP000148">
    <property type="protein sequence ID" value="ABB31668.1"/>
    <property type="status" value="ALT_INIT"/>
    <property type="molecule type" value="Genomic_DNA"/>
</dbReference>
<dbReference type="SMR" id="Q39VQ6"/>
<dbReference type="STRING" id="269799.Gmet_1434"/>
<dbReference type="KEGG" id="gme:Gmet_1434"/>
<dbReference type="eggNOG" id="COG0018">
    <property type="taxonomic scope" value="Bacteria"/>
</dbReference>
<dbReference type="HOGENOM" id="CLU_006406_0_1_7"/>
<dbReference type="Proteomes" id="UP000007073">
    <property type="component" value="Chromosome"/>
</dbReference>
<dbReference type="GO" id="GO:0005737">
    <property type="term" value="C:cytoplasm"/>
    <property type="evidence" value="ECO:0007669"/>
    <property type="project" value="UniProtKB-SubCell"/>
</dbReference>
<dbReference type="GO" id="GO:0004814">
    <property type="term" value="F:arginine-tRNA ligase activity"/>
    <property type="evidence" value="ECO:0007669"/>
    <property type="project" value="UniProtKB-UniRule"/>
</dbReference>
<dbReference type="GO" id="GO:0005524">
    <property type="term" value="F:ATP binding"/>
    <property type="evidence" value="ECO:0007669"/>
    <property type="project" value="UniProtKB-UniRule"/>
</dbReference>
<dbReference type="GO" id="GO:0006420">
    <property type="term" value="P:arginyl-tRNA aminoacylation"/>
    <property type="evidence" value="ECO:0007669"/>
    <property type="project" value="UniProtKB-UniRule"/>
</dbReference>
<dbReference type="CDD" id="cd07956">
    <property type="entry name" value="Anticodon_Ia_Arg"/>
    <property type="match status" value="1"/>
</dbReference>
<dbReference type="CDD" id="cd00671">
    <property type="entry name" value="ArgRS_core"/>
    <property type="match status" value="1"/>
</dbReference>
<dbReference type="FunFam" id="1.10.730.10:FF:000008">
    <property type="entry name" value="Arginine--tRNA ligase"/>
    <property type="match status" value="1"/>
</dbReference>
<dbReference type="FunFam" id="3.30.1360.70:FF:000003">
    <property type="entry name" value="Arginine--tRNA ligase"/>
    <property type="match status" value="1"/>
</dbReference>
<dbReference type="FunFam" id="3.40.50.620:FF:000062">
    <property type="entry name" value="Arginine--tRNA ligase"/>
    <property type="match status" value="1"/>
</dbReference>
<dbReference type="Gene3D" id="3.30.1360.70">
    <property type="entry name" value="Arginyl tRNA synthetase N-terminal domain"/>
    <property type="match status" value="1"/>
</dbReference>
<dbReference type="Gene3D" id="3.40.50.620">
    <property type="entry name" value="HUPs"/>
    <property type="match status" value="1"/>
</dbReference>
<dbReference type="Gene3D" id="1.10.730.10">
    <property type="entry name" value="Isoleucyl-tRNA Synthetase, Domain 1"/>
    <property type="match status" value="1"/>
</dbReference>
<dbReference type="HAMAP" id="MF_00123">
    <property type="entry name" value="Arg_tRNA_synth"/>
    <property type="match status" value="1"/>
</dbReference>
<dbReference type="InterPro" id="IPR001412">
    <property type="entry name" value="aa-tRNA-synth_I_CS"/>
</dbReference>
<dbReference type="InterPro" id="IPR001278">
    <property type="entry name" value="Arg-tRNA-ligase"/>
</dbReference>
<dbReference type="InterPro" id="IPR005148">
    <property type="entry name" value="Arg-tRNA-synth_N"/>
</dbReference>
<dbReference type="InterPro" id="IPR036695">
    <property type="entry name" value="Arg-tRNA-synth_N_sf"/>
</dbReference>
<dbReference type="InterPro" id="IPR035684">
    <property type="entry name" value="ArgRS_core"/>
</dbReference>
<dbReference type="InterPro" id="IPR008909">
    <property type="entry name" value="DALR_anticod-bd"/>
</dbReference>
<dbReference type="InterPro" id="IPR014729">
    <property type="entry name" value="Rossmann-like_a/b/a_fold"/>
</dbReference>
<dbReference type="InterPro" id="IPR009080">
    <property type="entry name" value="tRNAsynth_Ia_anticodon-bd"/>
</dbReference>
<dbReference type="NCBIfam" id="TIGR00456">
    <property type="entry name" value="argS"/>
    <property type="match status" value="1"/>
</dbReference>
<dbReference type="PANTHER" id="PTHR11956:SF5">
    <property type="entry name" value="ARGININE--TRNA LIGASE, CYTOPLASMIC"/>
    <property type="match status" value="1"/>
</dbReference>
<dbReference type="PANTHER" id="PTHR11956">
    <property type="entry name" value="ARGINYL-TRNA SYNTHETASE"/>
    <property type="match status" value="1"/>
</dbReference>
<dbReference type="Pfam" id="PF03485">
    <property type="entry name" value="Arg_tRNA_synt_N"/>
    <property type="match status" value="1"/>
</dbReference>
<dbReference type="Pfam" id="PF05746">
    <property type="entry name" value="DALR_1"/>
    <property type="match status" value="1"/>
</dbReference>
<dbReference type="Pfam" id="PF00750">
    <property type="entry name" value="tRNA-synt_1d"/>
    <property type="match status" value="1"/>
</dbReference>
<dbReference type="PRINTS" id="PR01038">
    <property type="entry name" value="TRNASYNTHARG"/>
</dbReference>
<dbReference type="SMART" id="SM01016">
    <property type="entry name" value="Arg_tRNA_synt_N"/>
    <property type="match status" value="1"/>
</dbReference>
<dbReference type="SMART" id="SM00836">
    <property type="entry name" value="DALR_1"/>
    <property type="match status" value="1"/>
</dbReference>
<dbReference type="SUPFAM" id="SSF47323">
    <property type="entry name" value="Anticodon-binding domain of a subclass of class I aminoacyl-tRNA synthetases"/>
    <property type="match status" value="1"/>
</dbReference>
<dbReference type="SUPFAM" id="SSF55190">
    <property type="entry name" value="Arginyl-tRNA synthetase (ArgRS), N-terminal 'additional' domain"/>
    <property type="match status" value="1"/>
</dbReference>
<dbReference type="SUPFAM" id="SSF52374">
    <property type="entry name" value="Nucleotidylyl transferase"/>
    <property type="match status" value="1"/>
</dbReference>
<dbReference type="PROSITE" id="PS00178">
    <property type="entry name" value="AA_TRNA_LIGASE_I"/>
    <property type="match status" value="1"/>
</dbReference>